<gene>
    <name evidence="1" type="primary">rnfE</name>
    <name type="ordered locus">NT01EI_2091</name>
</gene>
<comment type="function">
    <text evidence="1">Part of a membrane-bound complex that couples electron transfer with translocation of ions across the membrane.</text>
</comment>
<comment type="subunit">
    <text evidence="1">The complex is composed of six subunits: RnfA, RnfB, RnfC, RnfD, RnfE and RnfG.</text>
</comment>
<comment type="subcellular location">
    <subcellularLocation>
        <location evidence="1">Cell inner membrane</location>
        <topology evidence="1">Multi-pass membrane protein</topology>
    </subcellularLocation>
</comment>
<comment type="similarity">
    <text evidence="1">Belongs to the NqrDE/RnfAE family.</text>
</comment>
<dbReference type="EC" id="7.-.-.-" evidence="1"/>
<dbReference type="EMBL" id="CP001600">
    <property type="protein sequence ID" value="ACR69267.1"/>
    <property type="molecule type" value="Genomic_DNA"/>
</dbReference>
<dbReference type="RefSeq" id="WP_015871398.1">
    <property type="nucleotide sequence ID" value="NZ_CP169062.1"/>
</dbReference>
<dbReference type="SMR" id="C5BE26"/>
<dbReference type="STRING" id="67780.B6E78_03065"/>
<dbReference type="KEGG" id="eic:NT01EI_2091"/>
<dbReference type="PATRIC" id="fig|634503.3.peg.1867"/>
<dbReference type="HOGENOM" id="CLU_046659_1_0_6"/>
<dbReference type="OrthoDB" id="9782945at2"/>
<dbReference type="Proteomes" id="UP000001485">
    <property type="component" value="Chromosome"/>
</dbReference>
<dbReference type="GO" id="GO:0005886">
    <property type="term" value="C:plasma membrane"/>
    <property type="evidence" value="ECO:0007669"/>
    <property type="project" value="UniProtKB-SubCell"/>
</dbReference>
<dbReference type="GO" id="GO:0022900">
    <property type="term" value="P:electron transport chain"/>
    <property type="evidence" value="ECO:0007669"/>
    <property type="project" value="UniProtKB-UniRule"/>
</dbReference>
<dbReference type="HAMAP" id="MF_00478">
    <property type="entry name" value="RsxE_RnfE"/>
    <property type="match status" value="1"/>
</dbReference>
<dbReference type="InterPro" id="IPR003667">
    <property type="entry name" value="NqrDE/RnfAE"/>
</dbReference>
<dbReference type="InterPro" id="IPR010968">
    <property type="entry name" value="RnfE"/>
</dbReference>
<dbReference type="NCBIfam" id="NF009070">
    <property type="entry name" value="PRK12405.1"/>
    <property type="match status" value="1"/>
</dbReference>
<dbReference type="NCBIfam" id="TIGR01948">
    <property type="entry name" value="rnfE"/>
    <property type="match status" value="1"/>
</dbReference>
<dbReference type="PANTHER" id="PTHR30586">
    <property type="entry name" value="ELECTRON TRANSPORT COMPLEX PROTEIN RNFE"/>
    <property type="match status" value="1"/>
</dbReference>
<dbReference type="PANTHER" id="PTHR30586:SF0">
    <property type="entry name" value="ION-TRANSLOCATING OXIDOREDUCTASE COMPLEX SUBUNIT E"/>
    <property type="match status" value="1"/>
</dbReference>
<dbReference type="Pfam" id="PF02508">
    <property type="entry name" value="Rnf-Nqr"/>
    <property type="match status" value="1"/>
</dbReference>
<dbReference type="PIRSF" id="PIRSF006102">
    <property type="entry name" value="NQR_DE"/>
    <property type="match status" value="1"/>
</dbReference>
<organism>
    <name type="scientific">Edwardsiella ictaluri (strain 93-146)</name>
    <dbReference type="NCBI Taxonomy" id="634503"/>
    <lineage>
        <taxon>Bacteria</taxon>
        <taxon>Pseudomonadati</taxon>
        <taxon>Pseudomonadota</taxon>
        <taxon>Gammaproteobacteria</taxon>
        <taxon>Enterobacterales</taxon>
        <taxon>Hafniaceae</taxon>
        <taxon>Edwardsiella</taxon>
    </lineage>
</organism>
<protein>
    <recommendedName>
        <fullName evidence="1">Ion-translocating oxidoreductase complex subunit E</fullName>
        <ecNumber evidence="1">7.-.-.-</ecNumber>
    </recommendedName>
    <alternativeName>
        <fullName evidence="1">Rnf electron transport complex subunit E</fullName>
    </alternativeName>
</protein>
<reference key="1">
    <citation type="submission" date="2009-03" db="EMBL/GenBank/DDBJ databases">
        <title>Complete genome sequence of Edwardsiella ictaluri 93-146.</title>
        <authorList>
            <person name="Williams M.L."/>
            <person name="Gillaspy A.F."/>
            <person name="Dyer D.W."/>
            <person name="Thune R.L."/>
            <person name="Waldbieser G.C."/>
            <person name="Schuster S.C."/>
            <person name="Gipson J."/>
            <person name="Zaitshik J."/>
            <person name="Landry C."/>
            <person name="Lawrence M.L."/>
        </authorList>
    </citation>
    <scope>NUCLEOTIDE SEQUENCE [LARGE SCALE GENOMIC DNA]</scope>
    <source>
        <strain>93-146</strain>
    </source>
</reference>
<sequence>MSEAKNLFINGLWKNNSALVQLLGLCPLLAVSSTATNALGLGLATTLVLVLTNSAVSALRRWVPGEIRIPIYVMIIASVVSAVQMLINAYAFGLYQSLGIFIPLIVTNCIVIGRAEAYAAHHPVGMAALDGLATGLGATAALFVLGALREILGNGTLFDGADLLLGHWARALRIELFHTDTPFLLAILPPGAFLGLGFMLAFKYVIEQKRRQRQAQRSAVGQALRGAAPTDNHEQA</sequence>
<evidence type="ECO:0000255" key="1">
    <source>
        <dbReference type="HAMAP-Rule" id="MF_00478"/>
    </source>
</evidence>
<evidence type="ECO:0000256" key="2">
    <source>
        <dbReference type="SAM" id="MobiDB-lite"/>
    </source>
</evidence>
<name>RNFE_EDWI9</name>
<proteinExistence type="inferred from homology"/>
<accession>C5BE26</accession>
<feature type="chain" id="PRO_1000206390" description="Ion-translocating oxidoreductase complex subunit E">
    <location>
        <begin position="1"/>
        <end position="236"/>
    </location>
</feature>
<feature type="transmembrane region" description="Helical" evidence="1">
    <location>
        <begin position="18"/>
        <end position="38"/>
    </location>
</feature>
<feature type="transmembrane region" description="Helical" evidence="1">
    <location>
        <begin position="39"/>
        <end position="59"/>
    </location>
</feature>
<feature type="transmembrane region" description="Helical" evidence="1">
    <location>
        <begin position="69"/>
        <end position="89"/>
    </location>
</feature>
<feature type="transmembrane region" description="Helical" evidence="1">
    <location>
        <begin position="92"/>
        <end position="112"/>
    </location>
</feature>
<feature type="transmembrane region" description="Helical" evidence="1">
    <location>
        <begin position="128"/>
        <end position="148"/>
    </location>
</feature>
<feature type="transmembrane region" description="Helical" evidence="1">
    <location>
        <begin position="182"/>
        <end position="202"/>
    </location>
</feature>
<feature type="region of interest" description="Disordered" evidence="2">
    <location>
        <begin position="217"/>
        <end position="236"/>
    </location>
</feature>
<keyword id="KW-0997">Cell inner membrane</keyword>
<keyword id="KW-1003">Cell membrane</keyword>
<keyword id="KW-0249">Electron transport</keyword>
<keyword id="KW-0472">Membrane</keyword>
<keyword id="KW-1278">Translocase</keyword>
<keyword id="KW-0812">Transmembrane</keyword>
<keyword id="KW-1133">Transmembrane helix</keyword>
<keyword id="KW-0813">Transport</keyword>